<evidence type="ECO:0000250" key="1"/>
<evidence type="ECO:0000250" key="2">
    <source>
        <dbReference type="UniProtKB" id="O77622"/>
    </source>
</evidence>
<evidence type="ECO:0000250" key="3">
    <source>
        <dbReference type="UniProtKB" id="P40227"/>
    </source>
</evidence>
<evidence type="ECO:0000255" key="4"/>
<evidence type="ECO:0000269" key="5">
    <source>
    </source>
</evidence>
<evidence type="ECO:0000305" key="6"/>
<evidence type="ECO:0000312" key="7">
    <source>
        <dbReference type="EMBL" id="CAG32239.1"/>
    </source>
</evidence>
<feature type="initiator methionine" description="Removed" evidence="1">
    <location>
        <position position="1"/>
    </location>
</feature>
<feature type="chain" id="PRO_0000223483" description="T-complex protein 1 subunit zeta">
    <location>
        <begin position="2"/>
        <end position="530"/>
    </location>
</feature>
<feature type="binding site" evidence="3">
    <location>
        <position position="38"/>
    </location>
    <ligand>
        <name>ADP</name>
        <dbReference type="ChEBI" id="CHEBI:456216"/>
    </ligand>
</feature>
<feature type="binding site" evidence="3">
    <location>
        <position position="38"/>
    </location>
    <ligand>
        <name>ATP</name>
        <dbReference type="ChEBI" id="CHEBI:30616"/>
    </ligand>
</feature>
<feature type="binding site" evidence="3">
    <location>
        <position position="89"/>
    </location>
    <ligand>
        <name>Mg(2+)</name>
        <dbReference type="ChEBI" id="CHEBI:18420"/>
    </ligand>
</feature>
<feature type="binding site" evidence="3">
    <location>
        <position position="90"/>
    </location>
    <ligand>
        <name>ADP</name>
        <dbReference type="ChEBI" id="CHEBI:456216"/>
    </ligand>
</feature>
<feature type="binding site" evidence="3">
    <location>
        <position position="90"/>
    </location>
    <ligand>
        <name>ATP</name>
        <dbReference type="ChEBI" id="CHEBI:30616"/>
    </ligand>
</feature>
<feature type="binding site" evidence="3">
    <location>
        <position position="91"/>
    </location>
    <ligand>
        <name>ADP</name>
        <dbReference type="ChEBI" id="CHEBI:456216"/>
    </ligand>
</feature>
<feature type="binding site" evidence="3">
    <location>
        <position position="91"/>
    </location>
    <ligand>
        <name>ATP</name>
        <dbReference type="ChEBI" id="CHEBI:30616"/>
    </ligand>
</feature>
<feature type="binding site" evidence="3">
    <location>
        <position position="92"/>
    </location>
    <ligand>
        <name>ADP</name>
        <dbReference type="ChEBI" id="CHEBI:456216"/>
    </ligand>
</feature>
<feature type="binding site" evidence="3">
    <location>
        <position position="92"/>
    </location>
    <ligand>
        <name>ATP</name>
        <dbReference type="ChEBI" id="CHEBI:30616"/>
    </ligand>
</feature>
<feature type="binding site" evidence="3">
    <location>
        <position position="93"/>
    </location>
    <ligand>
        <name>ADP</name>
        <dbReference type="ChEBI" id="CHEBI:456216"/>
    </ligand>
</feature>
<feature type="binding site" evidence="3">
    <location>
        <position position="157"/>
    </location>
    <ligand>
        <name>ADP</name>
        <dbReference type="ChEBI" id="CHEBI:456216"/>
    </ligand>
</feature>
<feature type="binding site" evidence="3">
    <location>
        <position position="158"/>
    </location>
    <ligand>
        <name>ADP</name>
        <dbReference type="ChEBI" id="CHEBI:456216"/>
    </ligand>
</feature>
<feature type="binding site" evidence="3">
    <location>
        <position position="410"/>
    </location>
    <ligand>
        <name>ADP</name>
        <dbReference type="ChEBI" id="CHEBI:456216"/>
    </ligand>
</feature>
<feature type="binding site" evidence="3">
    <location>
        <position position="410"/>
    </location>
    <ligand>
        <name>ATP</name>
        <dbReference type="ChEBI" id="CHEBI:30616"/>
    </ligand>
</feature>
<feature type="binding site" evidence="3">
    <location>
        <position position="411"/>
    </location>
    <ligand>
        <name>ATP</name>
        <dbReference type="ChEBI" id="CHEBI:30616"/>
    </ligand>
</feature>
<feature type="binding site" evidence="3">
    <location>
        <position position="495"/>
    </location>
    <ligand>
        <name>ADP</name>
        <dbReference type="ChEBI" id="CHEBI:456216"/>
    </ligand>
</feature>
<feature type="binding site" evidence="3">
    <location>
        <position position="495"/>
    </location>
    <ligand>
        <name>ATP</name>
        <dbReference type="ChEBI" id="CHEBI:30616"/>
    </ligand>
</feature>
<feature type="binding site" evidence="3">
    <location>
        <position position="500"/>
    </location>
    <ligand>
        <name>ATP</name>
        <dbReference type="ChEBI" id="CHEBI:30616"/>
    </ligand>
</feature>
<accession>Q5ZJ54</accession>
<accession>P84164</accession>
<dbReference type="EC" id="3.6.1.-" evidence="3"/>
<dbReference type="EMBL" id="AJ720580">
    <property type="protein sequence ID" value="CAG32239.1"/>
    <property type="molecule type" value="mRNA"/>
</dbReference>
<dbReference type="RefSeq" id="NP_001006216.1">
    <property type="nucleotide sequence ID" value="NM_001006216.1"/>
</dbReference>
<dbReference type="SMR" id="Q5ZJ54"/>
<dbReference type="BioGRID" id="678874">
    <property type="interactions" value="1"/>
</dbReference>
<dbReference type="FunCoup" id="Q5ZJ54">
    <property type="interactions" value="3681"/>
</dbReference>
<dbReference type="STRING" id="9031.ENSGALP00000003850"/>
<dbReference type="PaxDb" id="9031-ENSGALP00000003850"/>
<dbReference type="GeneID" id="417541"/>
<dbReference type="KEGG" id="gga:417541"/>
<dbReference type="CTD" id="908"/>
<dbReference type="VEuPathDB" id="HostDB:geneid_417541"/>
<dbReference type="eggNOG" id="KOG0359">
    <property type="taxonomic scope" value="Eukaryota"/>
</dbReference>
<dbReference type="HOGENOM" id="CLU_008891_3_1_1"/>
<dbReference type="InParanoid" id="Q5ZJ54"/>
<dbReference type="OMA" id="LHPRIMT"/>
<dbReference type="OrthoDB" id="10052040at2759"/>
<dbReference type="PhylomeDB" id="Q5ZJ54"/>
<dbReference type="Reactome" id="R-GGA-390471">
    <property type="pathway name" value="Association of TriC/CCT with target proteins during biosynthesis"/>
</dbReference>
<dbReference type="Reactome" id="R-GGA-6814122">
    <property type="pathway name" value="Cooperation of PDCL (PhLP1) and TRiC/CCT in G-protein beta folding"/>
</dbReference>
<dbReference type="Reactome" id="R-GGA-9013418">
    <property type="pathway name" value="RHOBTB2 GTPase cycle"/>
</dbReference>
<dbReference type="PRO" id="PR:Q5ZJ54"/>
<dbReference type="Proteomes" id="UP000000539">
    <property type="component" value="Chromosome 19"/>
</dbReference>
<dbReference type="Bgee" id="ENSGALG00000002448">
    <property type="expression patterns" value="Expressed in spermatid and 13 other cell types or tissues"/>
</dbReference>
<dbReference type="GO" id="GO:0005832">
    <property type="term" value="C:chaperonin-containing T-complex"/>
    <property type="evidence" value="ECO:0000318"/>
    <property type="project" value="GO_Central"/>
</dbReference>
<dbReference type="GO" id="GO:0005524">
    <property type="term" value="F:ATP binding"/>
    <property type="evidence" value="ECO:0007669"/>
    <property type="project" value="UniProtKB-KW"/>
</dbReference>
<dbReference type="GO" id="GO:0016887">
    <property type="term" value="F:ATP hydrolysis activity"/>
    <property type="evidence" value="ECO:0007669"/>
    <property type="project" value="InterPro"/>
</dbReference>
<dbReference type="GO" id="GO:0140662">
    <property type="term" value="F:ATP-dependent protein folding chaperone"/>
    <property type="evidence" value="ECO:0007669"/>
    <property type="project" value="InterPro"/>
</dbReference>
<dbReference type="GO" id="GO:0051082">
    <property type="term" value="F:unfolded protein binding"/>
    <property type="evidence" value="ECO:0000318"/>
    <property type="project" value="GO_Central"/>
</dbReference>
<dbReference type="GO" id="GO:0006457">
    <property type="term" value="P:protein folding"/>
    <property type="evidence" value="ECO:0000318"/>
    <property type="project" value="GO_Central"/>
</dbReference>
<dbReference type="CDD" id="cd03342">
    <property type="entry name" value="TCP1_zeta"/>
    <property type="match status" value="1"/>
</dbReference>
<dbReference type="FunFam" id="1.10.560.10:FF:000038">
    <property type="entry name" value="Chaperonin containing TCP1 subunit 6B"/>
    <property type="match status" value="1"/>
</dbReference>
<dbReference type="FunFam" id="3.30.260.10:FF:000029">
    <property type="entry name" value="Chaperonin containing TCP1 subunit 6B"/>
    <property type="match status" value="1"/>
</dbReference>
<dbReference type="FunFam" id="1.10.560.10:FF:000022">
    <property type="entry name" value="T-complex protein 1 subunit zeta"/>
    <property type="match status" value="1"/>
</dbReference>
<dbReference type="FunFam" id="3.30.260.10:FF:000017">
    <property type="entry name" value="T-complex protein 1 subunit zeta"/>
    <property type="match status" value="1"/>
</dbReference>
<dbReference type="FunFam" id="3.50.7.10:FF:000004">
    <property type="entry name" value="T-complex protein 1 subunit zeta"/>
    <property type="match status" value="1"/>
</dbReference>
<dbReference type="Gene3D" id="3.50.7.10">
    <property type="entry name" value="GroEL"/>
    <property type="match status" value="1"/>
</dbReference>
<dbReference type="Gene3D" id="1.10.560.10">
    <property type="entry name" value="GroEL-like equatorial domain"/>
    <property type="match status" value="1"/>
</dbReference>
<dbReference type="Gene3D" id="3.30.260.10">
    <property type="entry name" value="TCP-1-like chaperonin intermediate domain"/>
    <property type="match status" value="1"/>
</dbReference>
<dbReference type="InterPro" id="IPR012722">
    <property type="entry name" value="Chap_CCT_zeta"/>
</dbReference>
<dbReference type="InterPro" id="IPR017998">
    <property type="entry name" value="Chaperone_TCP-1"/>
</dbReference>
<dbReference type="InterPro" id="IPR002194">
    <property type="entry name" value="Chaperonin_TCP-1_CS"/>
</dbReference>
<dbReference type="InterPro" id="IPR002423">
    <property type="entry name" value="Cpn60/GroEL/TCP-1"/>
</dbReference>
<dbReference type="InterPro" id="IPR027409">
    <property type="entry name" value="GroEL-like_apical_dom_sf"/>
</dbReference>
<dbReference type="InterPro" id="IPR027413">
    <property type="entry name" value="GROEL-like_equatorial_sf"/>
</dbReference>
<dbReference type="InterPro" id="IPR027410">
    <property type="entry name" value="TCP-1-like_intermed_sf"/>
</dbReference>
<dbReference type="InterPro" id="IPR053374">
    <property type="entry name" value="TCP-1_chaperonin"/>
</dbReference>
<dbReference type="NCBIfam" id="TIGR02347">
    <property type="entry name" value="chap_CCT_zeta"/>
    <property type="match status" value="1"/>
</dbReference>
<dbReference type="NCBIfam" id="NF041083">
    <property type="entry name" value="thermosome_beta"/>
    <property type="match status" value="1"/>
</dbReference>
<dbReference type="PANTHER" id="PTHR11353">
    <property type="entry name" value="CHAPERONIN"/>
    <property type="match status" value="1"/>
</dbReference>
<dbReference type="Pfam" id="PF00118">
    <property type="entry name" value="Cpn60_TCP1"/>
    <property type="match status" value="1"/>
</dbReference>
<dbReference type="PRINTS" id="PR00304">
    <property type="entry name" value="TCOMPLEXTCP1"/>
</dbReference>
<dbReference type="SUPFAM" id="SSF52029">
    <property type="entry name" value="GroEL apical domain-like"/>
    <property type="match status" value="1"/>
</dbReference>
<dbReference type="SUPFAM" id="SSF48592">
    <property type="entry name" value="GroEL equatorial domain-like"/>
    <property type="match status" value="1"/>
</dbReference>
<dbReference type="SUPFAM" id="SSF54849">
    <property type="entry name" value="GroEL-intermediate domain like"/>
    <property type="match status" value="1"/>
</dbReference>
<dbReference type="PROSITE" id="PS00750">
    <property type="entry name" value="TCP1_1"/>
    <property type="match status" value="1"/>
</dbReference>
<dbReference type="PROSITE" id="PS00751">
    <property type="entry name" value="TCP1_2"/>
    <property type="match status" value="1"/>
</dbReference>
<dbReference type="PROSITE" id="PS00995">
    <property type="entry name" value="TCP1_3"/>
    <property type="match status" value="1"/>
</dbReference>
<reference evidence="6 7" key="1">
    <citation type="journal article" date="2005" name="Genome Biol.">
        <title>Full-length cDNAs from chicken bursal lymphocytes to facilitate gene function analysis.</title>
        <authorList>
            <person name="Caldwell R.B."/>
            <person name="Kierzek A.M."/>
            <person name="Arakawa H."/>
            <person name="Bezzubov Y."/>
            <person name="Zaim J."/>
            <person name="Fiedler P."/>
            <person name="Kutter S."/>
            <person name="Blagodatski A."/>
            <person name="Kostovska D."/>
            <person name="Koter M."/>
            <person name="Plachy J."/>
            <person name="Carninci P."/>
            <person name="Hayashizaki Y."/>
            <person name="Buerstedde J.-M."/>
        </authorList>
    </citation>
    <scope>NUCLEOTIDE SEQUENCE [LARGE SCALE MRNA]</scope>
    <source>
        <strain evidence="7">CB</strain>
        <tissue evidence="7">Bursa of Fabricius</tissue>
    </source>
</reference>
<reference evidence="6" key="2">
    <citation type="journal article" date="2005" name="Proteomics">
        <title>Proteomic analysis of the Gallus gallus embryo at stage-29 of development.</title>
        <authorList>
            <person name="Agudo D."/>
            <person name="Gomez-Esquer F."/>
            <person name="Diaz-Gil G."/>
            <person name="Martinez-Arribas F."/>
            <person name="Delcan J."/>
            <person name="Schneider J."/>
            <person name="Palomar M.A."/>
            <person name="Linares R."/>
        </authorList>
    </citation>
    <scope>IDENTIFICATION</scope>
    <scope>MASS SPECTROMETRY</scope>
    <source>
        <tissue evidence="5">Embryo</tissue>
    </source>
</reference>
<comment type="function">
    <text evidence="3">Component of the chaperonin-containing T-complex (TRiC), a molecular chaperone complex that assists the folding of actin, tubulin and other proteins upon ATP hydrolysis.</text>
</comment>
<comment type="catalytic activity">
    <reaction evidence="3">
        <text>ATP + H2O = ADP + phosphate + H(+)</text>
        <dbReference type="Rhea" id="RHEA:13065"/>
        <dbReference type="ChEBI" id="CHEBI:15377"/>
        <dbReference type="ChEBI" id="CHEBI:15378"/>
        <dbReference type="ChEBI" id="CHEBI:30616"/>
        <dbReference type="ChEBI" id="CHEBI:43474"/>
        <dbReference type="ChEBI" id="CHEBI:456216"/>
    </reaction>
</comment>
<comment type="subunit">
    <text evidence="3">Component of the chaperonin-containing T-complex (TRiC), a hexadecamer composed of two identical back-to-back stacked rings enclosing a protein folding chamber. Each ring is made up of eight different subunits: TCP1/CCT1, CCT2, CCT3, CCT4, CCT5, CCT6A/CCT6, CCT7, CCT8. Interacts with PACRG.</text>
</comment>
<comment type="subcellular location">
    <subcellularLocation>
        <location evidence="3">Cytoplasm</location>
    </subcellularLocation>
</comment>
<comment type="mass spectrometry" mass="58025.0" error="3.0" method="MALDI" evidence="5"/>
<comment type="similarity">
    <text evidence="4">Belongs to the TCP-1 chaperonin family.</text>
</comment>
<proteinExistence type="evidence at protein level"/>
<name>TCPZ_CHICK</name>
<protein>
    <recommendedName>
        <fullName>T-complex protein 1 subunit zeta</fullName>
        <shortName>TCP-1-zeta</shortName>
        <ecNumber evidence="3">3.6.1.-</ecNumber>
    </recommendedName>
    <alternativeName>
        <fullName>CCT-zeta</fullName>
    </alternativeName>
</protein>
<gene>
    <name evidence="2" type="primary">CCT6</name>
    <name type="ORF">RCJMB04_20k5</name>
</gene>
<organism>
    <name type="scientific">Gallus gallus</name>
    <name type="common">Chicken</name>
    <dbReference type="NCBI Taxonomy" id="9031"/>
    <lineage>
        <taxon>Eukaryota</taxon>
        <taxon>Metazoa</taxon>
        <taxon>Chordata</taxon>
        <taxon>Craniata</taxon>
        <taxon>Vertebrata</taxon>
        <taxon>Euteleostomi</taxon>
        <taxon>Archelosauria</taxon>
        <taxon>Archosauria</taxon>
        <taxon>Dinosauria</taxon>
        <taxon>Saurischia</taxon>
        <taxon>Theropoda</taxon>
        <taxon>Coelurosauria</taxon>
        <taxon>Aves</taxon>
        <taxon>Neognathae</taxon>
        <taxon>Galloanserae</taxon>
        <taxon>Galliformes</taxon>
        <taxon>Phasianidae</taxon>
        <taxon>Phasianinae</taxon>
        <taxon>Gallus</taxon>
    </lineage>
</organism>
<keyword id="KW-0067">ATP-binding</keyword>
<keyword id="KW-0143">Chaperone</keyword>
<keyword id="KW-0963">Cytoplasm</keyword>
<keyword id="KW-0378">Hydrolase</keyword>
<keyword id="KW-0460">Magnesium</keyword>
<keyword id="KW-0479">Metal-binding</keyword>
<keyword id="KW-0547">Nucleotide-binding</keyword>
<keyword id="KW-1185">Reference proteome</keyword>
<sequence length="530" mass="57645">MAVKALNPKAEVARAQAALAVNISAARGLQDVLRTNLGPKGTMKMLVSGAGDIKLTKDGNVLLQEMQIQHPTASLIAKVATAQDDITGDGTTSNVLIIGELLKQADLYISEGLHPRIVAEGFEIAKEKALEVLEQVKVTKEMDRETLIDVAKTSLRTKVHTELADILTEAVVDSVLAVRKPGEPIDLHMVEIMEMKHKSETDTTLIRGLVLDHGARHPDMKKRVEDAYILTCNVSLEYEKTEVSAGFFYKSAEEREKLVKAERKFIEDRVSKIIDLKRRVCGDSDKGFIVINQKGIDPFSLDALAKEGIVALRRAKRRNMERLTLACGGTAMNSVEDLTPDCLGHAGLVYEYTLGEEKYTFIEKCDNPRSVTLLIRGPNKHTLTQIKDAVRDGLRAVKNAIEDGCVIPGAGALEVAVANALVKHKPNVKGRAQLGVQAFADALLIIPKVLAQNSGYDPQETLVKVQAEHAESGQLTGVDLNTGEPMVAAAAGIWDNYNVKKQLLHSCTVIASNILLVDEIMRAGMSSLKG</sequence>